<reference key="1">
    <citation type="submission" date="1991-07" db="EMBL/GenBank/DDBJ databases">
        <authorList>
            <person name="Peters J.-M."/>
        </authorList>
    </citation>
    <scope>NUCLEOTIDE SEQUENCE [MRNA]</scope>
    <source>
        <tissue>Embryo</tissue>
    </source>
</reference>
<reference key="2">
    <citation type="submission" date="2003-02" db="EMBL/GenBank/DDBJ databases">
        <authorList>
            <consortium name="NIH - Xenopus Gene Collection (XGC) project"/>
        </authorList>
    </citation>
    <scope>NUCLEOTIDE SEQUENCE [LARGE SCALE MRNA]</scope>
    <source>
        <tissue>Embryo</tissue>
    </source>
</reference>
<reference key="3">
    <citation type="journal article" date="1990" name="EMBO J.">
        <title>An abundant and ubiquitous homo-oligomeric ring-shaped ATPase particle related to the putative vesicle fusion proteins Sec18p and NSF.</title>
        <authorList>
            <person name="Peters J.-M."/>
            <person name="Walsh M.J."/>
            <person name="Franke W.W."/>
        </authorList>
    </citation>
    <scope>NUCLEOTIDE SEQUENCE [MRNA] OF 443-805</scope>
    <scope>PARTIAL PROTEIN SEQUENCE</scope>
    <scope>CATALYTIC ACTIVITY</scope>
    <scope>ACTIVITY REGULATION</scope>
    <scope>HOMOHEXAMERIZATION</scope>
    <scope>SUBCELLULAR LOCATION</scope>
    <scope>TISSUE SPECIFICITY</scope>
    <scope>PHOSPHORYLATION</scope>
    <source>
        <tissue>Embryo</tissue>
        <tissue>Oocyte</tissue>
    </source>
</reference>
<reference key="4">
    <citation type="journal article" date="2000" name="FEBS Lett.">
        <title>p97 ATPase, an ATPase involved in membrane fusion, interacts with DNA unwinding factor (DUF) that functions in DNA replication.</title>
        <authorList>
            <person name="Yamada T."/>
            <person name="Okuhara K."/>
            <person name="Iwamatsu A."/>
            <person name="Seo H."/>
            <person name="Ohta K."/>
            <person name="Shibata T."/>
            <person name="Murofushi H."/>
        </authorList>
    </citation>
    <scope>PROTEIN SEQUENCE OF 45-77 AND 389-405</scope>
    <scope>INTERACTION WITH FACT COMPLEX</scope>
    <scope>SUBCELLULAR LOCATION</scope>
</reference>
<reference key="5">
    <citation type="journal article" date="2019" name="Life. Sci Alliance">
        <title>Mitotic replisome disassembly depends on TRAIP ubiquitin ligase activity.</title>
        <authorList>
            <person name="Priego Moreno S."/>
            <person name="Jones R.M."/>
            <person name="Poovathumkadavil D."/>
            <person name="Scaramuzza S."/>
            <person name="Gambus A."/>
        </authorList>
    </citation>
    <scope>FUNCTION</scope>
</reference>
<reference key="6">
    <citation type="journal article" date="2019" name="Mol. Cell">
        <title>Mitotic CDK Promotes replisome disassembly, fork breakage, and complex DNA rearrangements.</title>
        <authorList>
            <person name="Deng L."/>
            <person name="Wu R.A."/>
            <person name="Sonneville R."/>
            <person name="Kochenova O.V."/>
            <person name="Labib K."/>
            <person name="Pellman D."/>
            <person name="Walter J.C."/>
        </authorList>
    </citation>
    <scope>FUNCTION</scope>
</reference>
<reference key="7">
    <citation type="journal article" date="2019" name="Nature">
        <title>TRAIP is a master regulator of DNA interstrand crosslink repair.</title>
        <authorList>
            <person name="Wu R.A."/>
            <person name="Semlow D.R."/>
            <person name="Kamimae-Lanning A.N."/>
            <person name="Kochenova O.V."/>
            <person name="Chistol G."/>
            <person name="Hodskinson M.R."/>
            <person name="Amunugama R."/>
            <person name="Sparks J.L."/>
            <person name="Wang M."/>
            <person name="Deng L."/>
            <person name="Mimoso C.A."/>
            <person name="Low E."/>
            <person name="Patel K.J."/>
            <person name="Walter J.C."/>
        </authorList>
    </citation>
    <scope>FUNCTION</scope>
</reference>
<protein>
    <recommendedName>
        <fullName>Transitional endoplasmic reticulum ATPase</fullName>
        <shortName>TER ATPase</shortName>
        <ecNumber evidence="8">3.6.4.6</ecNumber>
    </recommendedName>
    <alternativeName>
        <fullName>15S Mg(2+)-ATPase p97 subunit</fullName>
        <shortName>p97</shortName>
    </alternativeName>
    <alternativeName>
        <fullName>Valosin-containing protein</fullName>
        <shortName>VCP</shortName>
    </alternativeName>
</protein>
<comment type="function">
    <text evidence="2 3 5 9 10 11">Necessary for the fragmentation of Golgi stacks during mitosis and for their reassembly after mitosis. Involved in the formation of the nuclear envelope, and of the transitional endoplasmic reticulum (tER). The transfer of membranes from the endoplasmic reticulum to the Golgi apparatus occurs via 50-70 nm transition vesicles which derive from part-rough, part-smooth transitional elements of the endoplasmic reticulum (tER). Vesicle budding from the tER is an ATP-dependent process. Involved in endoplasmic reticulum stress-induced pre-emptive quality control, a mechanism that selectively attenuates the translocation of newly synthesized proteins into the endoplasmic reticulum and reroutes them to the cytosol for proteasomal degradation. Involved in clearance process by mediating G3BP1 extraction from stress granules (By similarity). Also involved in DNA damage response: recruited to double-strand breaks (DSBs) sites and promotes the recruitment of tp53bp1 at DNA damage sites (By similarity). Together with sprtn metalloprotease, involved in the repair of covalent DNA-protein cross-links (DPCs) during DNA synthesis (By similarity). Involved in interstrand cross-link repair in response to replication stress by mediating unloading of the ubiquitinated CMG helicase complex (PubMed:30842657, PubMed:30849395, PubMed:30979826). Enhances cell cycle progression and inhibits apoptosis at low temperatures (By similarity). Essential for the maturation of ubiquitin-containing autophagosomes and the clearance of ubiquitinated protein by autophagy (By similarity). Acts as a negative regulator of type I interferon production by promoting ubiquitination of rigi (By similarity). May play a role in the ubiquitin-dependent sorting of membrane proteins to lysosomes where they undergo degradation (By similarity). May more particularly play a role in caveolins sorting in cells (By similarity). By controlling the steady-state expression of the IGF1R receptor, indirectly regulates the insulin-like growth factor receptor signaling pathway (By similarity).</text>
</comment>
<comment type="catalytic activity">
    <reaction evidence="8">
        <text>ATP + H2O = ADP + phosphate + H(+)</text>
        <dbReference type="Rhea" id="RHEA:13065"/>
        <dbReference type="ChEBI" id="CHEBI:15377"/>
        <dbReference type="ChEBI" id="CHEBI:15378"/>
        <dbReference type="ChEBI" id="CHEBI:30616"/>
        <dbReference type="ChEBI" id="CHEBI:43474"/>
        <dbReference type="ChEBI" id="CHEBI:456216"/>
        <dbReference type="EC" id="3.6.4.6"/>
    </reaction>
</comment>
<comment type="activity regulation">
    <text evidence="8">ATPase activity is inhibited or reduced by lowering pH from 9.0 to 7.0, and by addition of Ca(2+), EDTA, KNO(3) or by treatment with N-ethylmaleimide (NEM).</text>
</comment>
<comment type="subunit">
    <text evidence="7">Homohexamer. Forms a ring-shaped particle of 12.5 nm diameter, that displays 6-fold radial symmetry. Interacts with the FACT/DUF complex, which contains subunits ssrp1/duf87 and supt16h/duf140.</text>
</comment>
<comment type="subcellular location">
    <subcellularLocation>
        <location evidence="8">Cytoplasm</location>
        <location evidence="8">Cytosol</location>
    </subcellularLocation>
    <subcellularLocation>
        <location evidence="3">Endoplasmic reticulum</location>
    </subcellularLocation>
    <subcellularLocation>
        <location evidence="8">Nucleus</location>
    </subcellularLocation>
    <subcellularLocation>
        <location evidence="3">Cytoplasm</location>
        <location evidence="3">Stress granule</location>
    </subcellularLocation>
</comment>
<comment type="tissue specificity">
    <text evidence="8">Expressed in at least oocytes, liver and kidney (at protein level).</text>
</comment>
<comment type="PTM">
    <text evidence="8">Phosphorylated.</text>
</comment>
<comment type="similarity">
    <text evidence="12">Belongs to the AAA ATPase family.</text>
</comment>
<dbReference type="EC" id="3.6.4.6" evidence="8"/>
<dbReference type="EMBL" id="X54240">
    <property type="protein sequence ID" value="CAA38146.1"/>
    <property type="molecule type" value="mRNA"/>
</dbReference>
<dbReference type="EMBL" id="BC046949">
    <property type="protein sequence ID" value="AAH46949.1"/>
    <property type="molecule type" value="mRNA"/>
</dbReference>
<dbReference type="PIR" id="S19738">
    <property type="entry name" value="S19738"/>
</dbReference>
<dbReference type="RefSeq" id="NP_001095217.1">
    <property type="nucleotide sequence ID" value="NM_001101747.1"/>
</dbReference>
<dbReference type="SMR" id="P23787"/>
<dbReference type="BioGRID" id="98733">
    <property type="interactions" value="4"/>
</dbReference>
<dbReference type="DIP" id="DIP-60369N"/>
<dbReference type="IntAct" id="P23787">
    <property type="interactions" value="1"/>
</dbReference>
<dbReference type="GeneID" id="380491"/>
<dbReference type="KEGG" id="xla:380491"/>
<dbReference type="AGR" id="Xenbase:XB-GENE-969578"/>
<dbReference type="CTD" id="380491"/>
<dbReference type="Xenbase" id="XB-GENE-969578">
    <property type="gene designation" value="vcp.S"/>
</dbReference>
<dbReference type="OrthoDB" id="27435at2759"/>
<dbReference type="CD-CODE" id="78E86D56">
    <property type="entry name" value="Mitochondrial cloud"/>
</dbReference>
<dbReference type="Proteomes" id="UP000186698">
    <property type="component" value="Chromosome 1S"/>
</dbReference>
<dbReference type="Bgee" id="380491">
    <property type="expression patterns" value="Expressed in intestine and 19 other cell types or tissues"/>
</dbReference>
<dbReference type="GO" id="GO:0000785">
    <property type="term" value="C:chromatin"/>
    <property type="evidence" value="ECO:0000314"/>
    <property type="project" value="UniProtKB"/>
</dbReference>
<dbReference type="GO" id="GO:0005737">
    <property type="term" value="C:cytoplasm"/>
    <property type="evidence" value="ECO:0000314"/>
    <property type="project" value="UniProtKB"/>
</dbReference>
<dbReference type="GO" id="GO:0010494">
    <property type="term" value="C:cytoplasmic stress granule"/>
    <property type="evidence" value="ECO:0000250"/>
    <property type="project" value="UniProtKB"/>
</dbReference>
<dbReference type="GO" id="GO:0005829">
    <property type="term" value="C:cytosol"/>
    <property type="evidence" value="ECO:0000318"/>
    <property type="project" value="GO_Central"/>
</dbReference>
<dbReference type="GO" id="GO:0005634">
    <property type="term" value="C:nucleus"/>
    <property type="evidence" value="ECO:0000314"/>
    <property type="project" value="UniProtKB"/>
</dbReference>
<dbReference type="GO" id="GO:0035861">
    <property type="term" value="C:site of double-strand break"/>
    <property type="evidence" value="ECO:0000250"/>
    <property type="project" value="UniProtKB"/>
</dbReference>
<dbReference type="GO" id="GO:0034098">
    <property type="term" value="C:VCP-NPL4-UFD1 AAA ATPase complex"/>
    <property type="evidence" value="ECO:0000318"/>
    <property type="project" value="GO_Central"/>
</dbReference>
<dbReference type="GO" id="GO:0005524">
    <property type="term" value="F:ATP binding"/>
    <property type="evidence" value="ECO:0007669"/>
    <property type="project" value="UniProtKB-KW"/>
</dbReference>
<dbReference type="GO" id="GO:0016887">
    <property type="term" value="F:ATP hydrolysis activity"/>
    <property type="evidence" value="ECO:0000314"/>
    <property type="project" value="UniProtKB"/>
</dbReference>
<dbReference type="GO" id="GO:0042802">
    <property type="term" value="F:identical protein binding"/>
    <property type="evidence" value="ECO:0000353"/>
    <property type="project" value="UniProtKB"/>
</dbReference>
<dbReference type="GO" id="GO:0008289">
    <property type="term" value="F:lipid binding"/>
    <property type="evidence" value="ECO:0007669"/>
    <property type="project" value="UniProtKB-KW"/>
</dbReference>
<dbReference type="GO" id="GO:0031593">
    <property type="term" value="F:polyubiquitin modification-dependent protein binding"/>
    <property type="evidence" value="ECO:0000318"/>
    <property type="project" value="GO_Central"/>
</dbReference>
<dbReference type="GO" id="GO:0044877">
    <property type="term" value="F:protein-containing complex binding"/>
    <property type="evidence" value="ECO:0000353"/>
    <property type="project" value="UniProtKB"/>
</dbReference>
<dbReference type="GO" id="GO:0097352">
    <property type="term" value="P:autophagosome maturation"/>
    <property type="evidence" value="ECO:0000250"/>
    <property type="project" value="UniProtKB"/>
</dbReference>
<dbReference type="GO" id="GO:0006914">
    <property type="term" value="P:autophagy"/>
    <property type="evidence" value="ECO:0000250"/>
    <property type="project" value="UniProtKB"/>
</dbReference>
<dbReference type="GO" id="GO:1903843">
    <property type="term" value="P:cellular response to arsenite ion"/>
    <property type="evidence" value="ECO:0000250"/>
    <property type="project" value="UniProtKB"/>
</dbReference>
<dbReference type="GO" id="GO:0034605">
    <property type="term" value="P:cellular response to heat"/>
    <property type="evidence" value="ECO:0000250"/>
    <property type="project" value="UniProtKB"/>
</dbReference>
<dbReference type="GO" id="GO:0006974">
    <property type="term" value="P:DNA damage response"/>
    <property type="evidence" value="ECO:0000250"/>
    <property type="project" value="UniProtKB"/>
</dbReference>
<dbReference type="GO" id="GO:0006281">
    <property type="term" value="P:DNA repair"/>
    <property type="evidence" value="ECO:0000314"/>
    <property type="project" value="UniProtKB"/>
</dbReference>
<dbReference type="GO" id="GO:0006302">
    <property type="term" value="P:double-strand break repair"/>
    <property type="evidence" value="ECO:0000250"/>
    <property type="project" value="UniProtKB"/>
</dbReference>
<dbReference type="GO" id="GO:0061857">
    <property type="term" value="P:endoplasmic reticulum stress-induced pre-emptive quality control"/>
    <property type="evidence" value="ECO:0000250"/>
    <property type="project" value="UniProtKB"/>
</dbReference>
<dbReference type="GO" id="GO:0032510">
    <property type="term" value="P:endosome to lysosome transport via multivesicular body sorting pathway"/>
    <property type="evidence" value="ECO:0000250"/>
    <property type="project" value="UniProtKB"/>
</dbReference>
<dbReference type="GO" id="GO:0036503">
    <property type="term" value="P:ERAD pathway"/>
    <property type="evidence" value="ECO:0000250"/>
    <property type="project" value="UniProtKB"/>
</dbReference>
<dbReference type="GO" id="GO:0036297">
    <property type="term" value="P:interstrand cross-link repair"/>
    <property type="evidence" value="ECO:0000314"/>
    <property type="project" value="UniProtKB"/>
</dbReference>
<dbReference type="GO" id="GO:0016236">
    <property type="term" value="P:macroautophagy"/>
    <property type="evidence" value="ECO:0000250"/>
    <property type="project" value="UniProtKB"/>
</dbReference>
<dbReference type="GO" id="GO:0051228">
    <property type="term" value="P:mitotic spindle disassembly"/>
    <property type="evidence" value="ECO:0000318"/>
    <property type="project" value="GO_Central"/>
</dbReference>
<dbReference type="GO" id="GO:0010498">
    <property type="term" value="P:proteasomal protein catabolic process"/>
    <property type="evidence" value="ECO:0000250"/>
    <property type="project" value="UniProtKB"/>
</dbReference>
<dbReference type="GO" id="GO:0043161">
    <property type="term" value="P:proteasome-mediated ubiquitin-dependent protein catabolic process"/>
    <property type="evidence" value="ECO:0000250"/>
    <property type="project" value="UniProtKB"/>
</dbReference>
<dbReference type="GO" id="GO:0016567">
    <property type="term" value="P:protein ubiquitination"/>
    <property type="evidence" value="ECO:0000250"/>
    <property type="project" value="UniProtKB"/>
</dbReference>
<dbReference type="GO" id="GO:1905634">
    <property type="term" value="P:regulation of protein localization to chromatin"/>
    <property type="evidence" value="ECO:0000314"/>
    <property type="project" value="UniProtKB"/>
</dbReference>
<dbReference type="GO" id="GO:0030970">
    <property type="term" value="P:retrograde protein transport, ER to cytosol"/>
    <property type="evidence" value="ECO:0000318"/>
    <property type="project" value="GO_Central"/>
</dbReference>
<dbReference type="GO" id="GO:0035617">
    <property type="term" value="P:stress granule disassembly"/>
    <property type="evidence" value="ECO:0000250"/>
    <property type="project" value="UniProtKB"/>
</dbReference>
<dbReference type="GO" id="GO:0019985">
    <property type="term" value="P:translesion synthesis"/>
    <property type="evidence" value="ECO:0000250"/>
    <property type="project" value="UniProtKB"/>
</dbReference>
<dbReference type="CDD" id="cd19519">
    <property type="entry name" value="RecA-like_CDC48_r1-like"/>
    <property type="match status" value="1"/>
</dbReference>
<dbReference type="CDD" id="cd19528">
    <property type="entry name" value="RecA-like_CDC48_r2-like"/>
    <property type="match status" value="1"/>
</dbReference>
<dbReference type="FunFam" id="1.10.8.60:FF:000004">
    <property type="entry name" value="Cell division control 48"/>
    <property type="match status" value="1"/>
</dbReference>
<dbReference type="FunFam" id="3.10.330.10:FF:000001">
    <property type="entry name" value="Cell division control 48"/>
    <property type="match status" value="1"/>
</dbReference>
<dbReference type="FunFam" id="2.40.40.20:FF:000003">
    <property type="entry name" value="Transitional endoplasmic reticulum ATPase"/>
    <property type="match status" value="1"/>
</dbReference>
<dbReference type="FunFam" id="3.40.50.300:FF:000012">
    <property type="entry name" value="Transitional endoplasmic reticulum ATPase"/>
    <property type="match status" value="1"/>
</dbReference>
<dbReference type="FunFam" id="3.40.50.300:FF:000048">
    <property type="entry name" value="Transitional endoplasmic reticulum ATPase"/>
    <property type="match status" value="1"/>
</dbReference>
<dbReference type="Gene3D" id="1.10.8.60">
    <property type="match status" value="1"/>
</dbReference>
<dbReference type="Gene3D" id="2.40.40.20">
    <property type="match status" value="1"/>
</dbReference>
<dbReference type="Gene3D" id="3.10.330.10">
    <property type="match status" value="1"/>
</dbReference>
<dbReference type="Gene3D" id="6.10.20.150">
    <property type="match status" value="1"/>
</dbReference>
<dbReference type="Gene3D" id="3.40.50.300">
    <property type="entry name" value="P-loop containing nucleotide triphosphate hydrolases"/>
    <property type="match status" value="2"/>
</dbReference>
<dbReference type="InterPro" id="IPR003593">
    <property type="entry name" value="AAA+_ATPase"/>
</dbReference>
<dbReference type="InterPro" id="IPR005938">
    <property type="entry name" value="AAA_ATPase_CDC48"/>
</dbReference>
<dbReference type="InterPro" id="IPR050168">
    <property type="entry name" value="AAA_ATPase_domain"/>
</dbReference>
<dbReference type="InterPro" id="IPR041569">
    <property type="entry name" value="AAA_lid_3"/>
</dbReference>
<dbReference type="InterPro" id="IPR009010">
    <property type="entry name" value="Asp_de-COase-like_dom_sf"/>
</dbReference>
<dbReference type="InterPro" id="IPR003959">
    <property type="entry name" value="ATPase_AAA_core"/>
</dbReference>
<dbReference type="InterPro" id="IPR003960">
    <property type="entry name" value="ATPase_AAA_CS"/>
</dbReference>
<dbReference type="InterPro" id="IPR004201">
    <property type="entry name" value="Cdc48_dom2"/>
</dbReference>
<dbReference type="InterPro" id="IPR029067">
    <property type="entry name" value="CDC48_domain_2-like_sf"/>
</dbReference>
<dbReference type="InterPro" id="IPR003338">
    <property type="entry name" value="CDC4_N-term_subdom"/>
</dbReference>
<dbReference type="InterPro" id="IPR027417">
    <property type="entry name" value="P-loop_NTPase"/>
</dbReference>
<dbReference type="NCBIfam" id="TIGR01243">
    <property type="entry name" value="CDC48"/>
    <property type="match status" value="1"/>
</dbReference>
<dbReference type="PANTHER" id="PTHR23077">
    <property type="entry name" value="AAA-FAMILY ATPASE"/>
    <property type="match status" value="1"/>
</dbReference>
<dbReference type="PANTHER" id="PTHR23077:SF69">
    <property type="entry name" value="TRANSITIONAL ENDOPLASMIC RETICULUM ATPASE"/>
    <property type="match status" value="1"/>
</dbReference>
<dbReference type="Pfam" id="PF00004">
    <property type="entry name" value="AAA"/>
    <property type="match status" value="2"/>
</dbReference>
<dbReference type="Pfam" id="PF17862">
    <property type="entry name" value="AAA_lid_3"/>
    <property type="match status" value="2"/>
</dbReference>
<dbReference type="Pfam" id="PF02933">
    <property type="entry name" value="CDC48_2"/>
    <property type="match status" value="1"/>
</dbReference>
<dbReference type="Pfam" id="PF02359">
    <property type="entry name" value="CDC48_N"/>
    <property type="match status" value="1"/>
</dbReference>
<dbReference type="SMART" id="SM00382">
    <property type="entry name" value="AAA"/>
    <property type="match status" value="2"/>
</dbReference>
<dbReference type="SMART" id="SM01072">
    <property type="entry name" value="CDC48_2"/>
    <property type="match status" value="1"/>
</dbReference>
<dbReference type="SMART" id="SM01073">
    <property type="entry name" value="CDC48_N"/>
    <property type="match status" value="1"/>
</dbReference>
<dbReference type="SUPFAM" id="SSF50692">
    <property type="entry name" value="ADC-like"/>
    <property type="match status" value="1"/>
</dbReference>
<dbReference type="SUPFAM" id="SSF54585">
    <property type="entry name" value="Cdc48 domain 2-like"/>
    <property type="match status" value="1"/>
</dbReference>
<dbReference type="SUPFAM" id="SSF52540">
    <property type="entry name" value="P-loop containing nucleoside triphosphate hydrolases"/>
    <property type="match status" value="2"/>
</dbReference>
<dbReference type="PROSITE" id="PS00674">
    <property type="entry name" value="AAA"/>
    <property type="match status" value="2"/>
</dbReference>
<sequence>MASGSDTKSDDLSTAILKQKSRPNRLIVDESINEDNSMVSLSQAKMDELQLFRGDTVLLKGKKRREAVCIVLSDDTCSDEKIRMNRVVRNNLRVRLGDVISIQPCPDVKYGKRVHVLPIDDTVEGITGNLFEVYLKPYFLEAYRPIRKGDIFLVRGGMRAVEFKVVETDPSPYCIVAPDTVIHCEGEPIKREDEEESLNEVGYDDIGGCRKQLAQIKEMVELPLRHPALFKAIGVKPPRGILLYGPPGTGKTLIARAVANETGAFFFLINGPEIMSKLAGESESNLRKAFEEAEKNAPAIIFIDELDAIAPKREKTHGEVERRIVSQLLTLMDGLKQRAHVIVMAATNRPNSIDPALRRFGRFDREVDIGIPDSTGRLEILQIHTKNMKLSDDVDLEQVANETHGHVGADLAALCSEAALQAIRKKMDLIDLEDETIDAEVMNSLAVTMDDFRWALSQSNPSALRETVVEVPQVTWEDIGGLEDVKRELQELVQYPVEHPDKFLKFGMTPSKGVLFYGPPGCGKTLLAKAIANECQANFISIKGPELLTMWFGESEANVREIFDKARQAAPCVLFFDELDSIAKARGGNIGDGGGAADRVINQILTEMDGMSIKKNVFIIGATNRPDIIDPAILRPGRLDQLIYIPLPDEKSRMAILKANLRKSPVAKDVDVDFLAKMTNGFSGADLTEICQRACKLAIRESIENEIRRERDRQTNPSAMEVEEDDPVPEIRRDHFEEAMRFARRSVSDNDIRKYEMFAQTLQQSRGFGSFRFPAGGQSGAGPSPGAGGGSGGGHFTEEDDDLYG</sequence>
<name>TERA_XENLA</name>
<feature type="chain" id="PRO_0000084576" description="Transitional endoplasmic reticulum ATPase">
    <location>
        <begin position="1"/>
        <end position="805"/>
    </location>
</feature>
<feature type="region of interest" description="Disordered" evidence="6">
    <location>
        <begin position="708"/>
        <end position="727"/>
    </location>
</feature>
<feature type="region of interest" description="Disordered" evidence="6">
    <location>
        <begin position="768"/>
        <end position="805"/>
    </location>
</feature>
<feature type="compositionally biased region" description="Gly residues" evidence="6">
    <location>
        <begin position="777"/>
        <end position="795"/>
    </location>
</feature>
<feature type="binding site" evidence="3">
    <location>
        <begin position="247"/>
        <end position="253"/>
    </location>
    <ligand>
        <name>ATP</name>
        <dbReference type="ChEBI" id="CHEBI:30616"/>
        <label>1</label>
    </ligand>
</feature>
<feature type="binding site" evidence="3">
    <location>
        <position position="348"/>
    </location>
    <ligand>
        <name>ATP</name>
        <dbReference type="ChEBI" id="CHEBI:30616"/>
        <label>1</label>
    </ligand>
</feature>
<feature type="binding site" evidence="3">
    <location>
        <position position="384"/>
    </location>
    <ligand>
        <name>ATP</name>
        <dbReference type="ChEBI" id="CHEBI:30616"/>
        <label>1</label>
    </ligand>
</feature>
<feature type="binding site" evidence="4">
    <location>
        <begin position="521"/>
        <end position="526"/>
    </location>
    <ligand>
        <name>ATP</name>
        <dbReference type="ChEBI" id="CHEBI:30616"/>
        <label>2</label>
    </ligand>
</feature>
<feature type="modified residue" description="Phosphoserine" evidence="1">
    <location>
        <position position="3"/>
    </location>
</feature>
<feature type="sequence conflict" description="In Ref. 1; CAA38146." evidence="12" ref="1">
    <original>M</original>
    <variation>V</variation>
    <location>
        <position position="38"/>
    </location>
</feature>
<feature type="sequence conflict" description="In Ref. 4; AA sequence." evidence="12" ref="4">
    <original>K</original>
    <variation>E</variation>
    <location>
        <position position="45"/>
    </location>
</feature>
<feature type="sequence conflict" description="In Ref. 1; CAA38146." evidence="12" ref="1">
    <original>A</original>
    <variation>G</variation>
    <location>
        <position position="455"/>
    </location>
</feature>
<feature type="sequence conflict" description="In Ref. 1; CAA38146." evidence="12" ref="1">
    <original>F</original>
    <variation>L</variation>
    <location>
        <position position="742"/>
    </location>
</feature>
<proteinExistence type="evidence at protein level"/>
<keyword id="KW-0067">ATP-binding</keyword>
<keyword id="KW-0072">Autophagy</keyword>
<keyword id="KW-0963">Cytoplasm</keyword>
<keyword id="KW-0903">Direct protein sequencing</keyword>
<keyword id="KW-0227">DNA damage</keyword>
<keyword id="KW-0234">DNA repair</keyword>
<keyword id="KW-0256">Endoplasmic reticulum</keyword>
<keyword id="KW-0378">Hydrolase</keyword>
<keyword id="KW-0446">Lipid-binding</keyword>
<keyword id="KW-0547">Nucleotide-binding</keyword>
<keyword id="KW-0539">Nucleus</keyword>
<keyword id="KW-0597">Phosphoprotein</keyword>
<keyword id="KW-1185">Reference proteome</keyword>
<keyword id="KW-0813">Transport</keyword>
<gene>
    <name type="primary">vcp</name>
</gene>
<accession>P23787</accession>
<accession>Q7ZWL8</accession>
<evidence type="ECO:0000250" key="1"/>
<evidence type="ECO:0000250" key="2">
    <source>
        <dbReference type="UniProtKB" id="P46462"/>
    </source>
</evidence>
<evidence type="ECO:0000250" key="3">
    <source>
        <dbReference type="UniProtKB" id="P55072"/>
    </source>
</evidence>
<evidence type="ECO:0000250" key="4">
    <source>
        <dbReference type="UniProtKB" id="Q01853"/>
    </source>
</evidence>
<evidence type="ECO:0000250" key="5">
    <source>
        <dbReference type="UniProtKB" id="Q7ZU99"/>
    </source>
</evidence>
<evidence type="ECO:0000256" key="6">
    <source>
        <dbReference type="SAM" id="MobiDB-lite"/>
    </source>
</evidence>
<evidence type="ECO:0000269" key="7">
    <source>
    </source>
</evidence>
<evidence type="ECO:0000269" key="8">
    <source>
    </source>
</evidence>
<evidence type="ECO:0000269" key="9">
    <source>
    </source>
</evidence>
<evidence type="ECO:0000269" key="10">
    <source>
    </source>
</evidence>
<evidence type="ECO:0000269" key="11">
    <source>
    </source>
</evidence>
<evidence type="ECO:0000305" key="12"/>
<organism>
    <name type="scientific">Xenopus laevis</name>
    <name type="common">African clawed frog</name>
    <dbReference type="NCBI Taxonomy" id="8355"/>
    <lineage>
        <taxon>Eukaryota</taxon>
        <taxon>Metazoa</taxon>
        <taxon>Chordata</taxon>
        <taxon>Craniata</taxon>
        <taxon>Vertebrata</taxon>
        <taxon>Euteleostomi</taxon>
        <taxon>Amphibia</taxon>
        <taxon>Batrachia</taxon>
        <taxon>Anura</taxon>
        <taxon>Pipoidea</taxon>
        <taxon>Pipidae</taxon>
        <taxon>Xenopodinae</taxon>
        <taxon>Xenopus</taxon>
        <taxon>Xenopus</taxon>
    </lineage>
</organism>